<reference key="1">
    <citation type="journal article" date="2005" name="Nature">
        <title>The genome of the social amoeba Dictyostelium discoideum.</title>
        <authorList>
            <person name="Eichinger L."/>
            <person name="Pachebat J.A."/>
            <person name="Gloeckner G."/>
            <person name="Rajandream M.A."/>
            <person name="Sucgang R."/>
            <person name="Berriman M."/>
            <person name="Song J."/>
            <person name="Olsen R."/>
            <person name="Szafranski K."/>
            <person name="Xu Q."/>
            <person name="Tunggal B."/>
            <person name="Kummerfeld S."/>
            <person name="Madera M."/>
            <person name="Konfortov B.A."/>
            <person name="Rivero F."/>
            <person name="Bankier A.T."/>
            <person name="Lehmann R."/>
            <person name="Hamlin N."/>
            <person name="Davies R."/>
            <person name="Gaudet P."/>
            <person name="Fey P."/>
            <person name="Pilcher K."/>
            <person name="Chen G."/>
            <person name="Saunders D."/>
            <person name="Sodergren E.J."/>
            <person name="Davis P."/>
            <person name="Kerhornou A."/>
            <person name="Nie X."/>
            <person name="Hall N."/>
            <person name="Anjard C."/>
            <person name="Hemphill L."/>
            <person name="Bason N."/>
            <person name="Farbrother P."/>
            <person name="Desany B."/>
            <person name="Just E."/>
            <person name="Morio T."/>
            <person name="Rost R."/>
            <person name="Churcher C.M."/>
            <person name="Cooper J."/>
            <person name="Haydock S."/>
            <person name="van Driessche N."/>
            <person name="Cronin A."/>
            <person name="Goodhead I."/>
            <person name="Muzny D.M."/>
            <person name="Mourier T."/>
            <person name="Pain A."/>
            <person name="Lu M."/>
            <person name="Harper D."/>
            <person name="Lindsay R."/>
            <person name="Hauser H."/>
            <person name="James K.D."/>
            <person name="Quiles M."/>
            <person name="Madan Babu M."/>
            <person name="Saito T."/>
            <person name="Buchrieser C."/>
            <person name="Wardroper A."/>
            <person name="Felder M."/>
            <person name="Thangavelu M."/>
            <person name="Johnson D."/>
            <person name="Knights A."/>
            <person name="Loulseged H."/>
            <person name="Mungall K.L."/>
            <person name="Oliver K."/>
            <person name="Price C."/>
            <person name="Quail M.A."/>
            <person name="Urushihara H."/>
            <person name="Hernandez J."/>
            <person name="Rabbinowitsch E."/>
            <person name="Steffen D."/>
            <person name="Sanders M."/>
            <person name="Ma J."/>
            <person name="Kohara Y."/>
            <person name="Sharp S."/>
            <person name="Simmonds M.N."/>
            <person name="Spiegler S."/>
            <person name="Tivey A."/>
            <person name="Sugano S."/>
            <person name="White B."/>
            <person name="Walker D."/>
            <person name="Woodward J.R."/>
            <person name="Winckler T."/>
            <person name="Tanaka Y."/>
            <person name="Shaulsky G."/>
            <person name="Schleicher M."/>
            <person name="Weinstock G.M."/>
            <person name="Rosenthal A."/>
            <person name="Cox E.C."/>
            <person name="Chisholm R.L."/>
            <person name="Gibbs R.A."/>
            <person name="Loomis W.F."/>
            <person name="Platzer M."/>
            <person name="Kay R.R."/>
            <person name="Williams J.G."/>
            <person name="Dear P.H."/>
            <person name="Noegel A.A."/>
            <person name="Barrell B.G."/>
            <person name="Kuspa A."/>
        </authorList>
    </citation>
    <scope>NUCLEOTIDE SEQUENCE [LARGE SCALE GENOMIC DNA]</scope>
    <source>
        <strain>AX4</strain>
    </source>
</reference>
<reference key="2">
    <citation type="journal article" date="2007" name="Eukaryot. Cell">
        <title>Copine A is required for cytokinesis, contractile vacuole function, and development in Dictyostelium.</title>
        <authorList>
            <person name="Damer C.K."/>
            <person name="Bayeva M."/>
            <person name="Kim P.S."/>
            <person name="Ho L.K."/>
            <person name="Eberhardt E.S."/>
            <person name="Socec C.I."/>
            <person name="Lee J.S."/>
            <person name="Bruce E.A."/>
            <person name="Goldman-Yassen A.E."/>
            <person name="Naliboff L.C."/>
        </authorList>
    </citation>
    <scope>DEVELOPMENTAL STAGE</scope>
</reference>
<gene>
    <name type="primary">cpnD</name>
    <name type="ORF">DDB_G0267688</name>
</gene>
<proteinExistence type="evidence at transcript level"/>
<protein>
    <recommendedName>
        <fullName>Copine-D</fullName>
    </recommendedName>
</protein>
<accession>Q55GG1</accession>
<organism>
    <name type="scientific">Dictyostelium discoideum</name>
    <name type="common">Social amoeba</name>
    <dbReference type="NCBI Taxonomy" id="44689"/>
    <lineage>
        <taxon>Eukaryota</taxon>
        <taxon>Amoebozoa</taxon>
        <taxon>Evosea</taxon>
        <taxon>Eumycetozoa</taxon>
        <taxon>Dictyostelia</taxon>
        <taxon>Dictyosteliales</taxon>
        <taxon>Dictyosteliaceae</taxon>
        <taxon>Dictyostelium</taxon>
    </lineage>
</organism>
<feature type="chain" id="PRO_0000330657" description="Copine-D">
    <location>
        <begin position="1"/>
        <end position="530"/>
    </location>
</feature>
<feature type="domain" description="C2 1" evidence="1">
    <location>
        <begin position="1"/>
        <end position="122"/>
    </location>
</feature>
<feature type="domain" description="C2 2" evidence="1">
    <location>
        <begin position="130"/>
        <end position="248"/>
    </location>
</feature>
<feature type="domain" description="VWFA" evidence="2">
    <location>
        <begin position="289"/>
        <end position="507"/>
    </location>
</feature>
<feature type="binding site" evidence="1">
    <location>
        <position position="25"/>
    </location>
    <ligand>
        <name>Ca(2+)</name>
        <dbReference type="ChEBI" id="CHEBI:29108"/>
        <label>1</label>
    </ligand>
</feature>
<feature type="binding site" evidence="1">
    <location>
        <position position="25"/>
    </location>
    <ligand>
        <name>Ca(2+)</name>
        <dbReference type="ChEBI" id="CHEBI:29108"/>
        <label>2</label>
    </ligand>
</feature>
<feature type="binding site" evidence="1">
    <location>
        <position position="31"/>
    </location>
    <ligand>
        <name>Ca(2+)</name>
        <dbReference type="ChEBI" id="CHEBI:29108"/>
        <label>1</label>
    </ligand>
</feature>
<feature type="binding site" evidence="1">
    <location>
        <position position="85"/>
    </location>
    <ligand>
        <name>Ca(2+)</name>
        <dbReference type="ChEBI" id="CHEBI:29108"/>
        <label>1</label>
    </ligand>
</feature>
<feature type="binding site" evidence="1">
    <location>
        <position position="85"/>
    </location>
    <ligand>
        <name>Ca(2+)</name>
        <dbReference type="ChEBI" id="CHEBI:29108"/>
        <label>2</label>
    </ligand>
</feature>
<feature type="binding site" evidence="1">
    <location>
        <position position="87"/>
    </location>
    <ligand>
        <name>Ca(2+)</name>
        <dbReference type="ChEBI" id="CHEBI:29108"/>
        <label>1</label>
    </ligand>
</feature>
<feature type="binding site" evidence="1">
    <location>
        <position position="87"/>
    </location>
    <ligand>
        <name>Ca(2+)</name>
        <dbReference type="ChEBI" id="CHEBI:29108"/>
        <label>2</label>
    </ligand>
</feature>
<feature type="binding site" evidence="1">
    <location>
        <position position="100"/>
    </location>
    <ligand>
        <name>Ca(2+)</name>
        <dbReference type="ChEBI" id="CHEBI:29108"/>
        <label>2</label>
    </ligand>
</feature>
<evidence type="ECO:0000255" key="1">
    <source>
        <dbReference type="PROSITE-ProRule" id="PRU00041"/>
    </source>
</evidence>
<evidence type="ECO:0000255" key="2">
    <source>
        <dbReference type="PROSITE-ProRule" id="PRU00219"/>
    </source>
</evidence>
<evidence type="ECO:0000269" key="3">
    <source>
    </source>
</evidence>
<evidence type="ECO:0000305" key="4"/>
<dbReference type="EMBL" id="AAFI02000003">
    <property type="protein sequence ID" value="EAL73297.1"/>
    <property type="molecule type" value="Genomic_DNA"/>
</dbReference>
<dbReference type="RefSeq" id="XP_647223.1">
    <property type="nucleotide sequence ID" value="XM_642131.1"/>
</dbReference>
<dbReference type="SMR" id="Q55GG1"/>
<dbReference type="STRING" id="44689.Q55GG1"/>
<dbReference type="PaxDb" id="44689-DDB0216244"/>
<dbReference type="EnsemblProtists" id="EAL73297">
    <property type="protein sequence ID" value="EAL73297"/>
    <property type="gene ID" value="DDB_G0267688"/>
</dbReference>
<dbReference type="GeneID" id="8616027"/>
<dbReference type="KEGG" id="ddi:DDB_G0267688"/>
<dbReference type="dictyBase" id="DDB_G0267688">
    <property type="gene designation" value="cpnD"/>
</dbReference>
<dbReference type="VEuPathDB" id="AmoebaDB:DDB_G0267688"/>
<dbReference type="eggNOG" id="KOG1327">
    <property type="taxonomic scope" value="Eukaryota"/>
</dbReference>
<dbReference type="HOGENOM" id="CLU_020452_3_2_1"/>
<dbReference type="InParanoid" id="Q55GG1"/>
<dbReference type="OMA" id="KEQATMQ"/>
<dbReference type="PhylomeDB" id="Q55GG1"/>
<dbReference type="Reactome" id="R-DDI-1483206">
    <property type="pathway name" value="Glycerophospholipid biosynthesis"/>
</dbReference>
<dbReference type="Reactome" id="R-DDI-6798695">
    <property type="pathway name" value="Neutrophil degranulation"/>
</dbReference>
<dbReference type="PRO" id="PR:Q55GG1"/>
<dbReference type="Proteomes" id="UP000002195">
    <property type="component" value="Chromosome 1"/>
</dbReference>
<dbReference type="GO" id="GO:0005829">
    <property type="term" value="C:cytosol"/>
    <property type="evidence" value="ECO:0007669"/>
    <property type="project" value="UniProtKB-ARBA"/>
</dbReference>
<dbReference type="GO" id="GO:0005886">
    <property type="term" value="C:plasma membrane"/>
    <property type="evidence" value="ECO:0000318"/>
    <property type="project" value="GO_Central"/>
</dbReference>
<dbReference type="GO" id="GO:0005544">
    <property type="term" value="F:calcium-dependent phospholipid binding"/>
    <property type="evidence" value="ECO:0000318"/>
    <property type="project" value="GO_Central"/>
</dbReference>
<dbReference type="GO" id="GO:0046872">
    <property type="term" value="F:metal ion binding"/>
    <property type="evidence" value="ECO:0007669"/>
    <property type="project" value="UniProtKB-KW"/>
</dbReference>
<dbReference type="GO" id="GO:0071277">
    <property type="term" value="P:cellular response to calcium ion"/>
    <property type="evidence" value="ECO:0000318"/>
    <property type="project" value="GO_Central"/>
</dbReference>
<dbReference type="CDD" id="cd04048">
    <property type="entry name" value="C2A_Copine"/>
    <property type="match status" value="1"/>
</dbReference>
<dbReference type="CDD" id="cd04047">
    <property type="entry name" value="C2B_Copine"/>
    <property type="match status" value="1"/>
</dbReference>
<dbReference type="FunFam" id="2.60.40.150:FF:000243">
    <property type="entry name" value="Copine-3"/>
    <property type="match status" value="1"/>
</dbReference>
<dbReference type="FunFam" id="3.40.50.410:FF:000098">
    <property type="entry name" value="Copine-5"/>
    <property type="match status" value="1"/>
</dbReference>
<dbReference type="FunFam" id="2.60.40.150:FF:000219">
    <property type="entry name" value="Copine-E"/>
    <property type="match status" value="1"/>
</dbReference>
<dbReference type="Gene3D" id="2.60.40.150">
    <property type="entry name" value="C2 domain"/>
    <property type="match status" value="2"/>
</dbReference>
<dbReference type="Gene3D" id="3.40.50.410">
    <property type="entry name" value="von Willebrand factor, type A domain"/>
    <property type="match status" value="1"/>
</dbReference>
<dbReference type="InterPro" id="IPR000008">
    <property type="entry name" value="C2_dom"/>
</dbReference>
<dbReference type="InterPro" id="IPR035892">
    <property type="entry name" value="C2_domain_sf"/>
</dbReference>
<dbReference type="InterPro" id="IPR037768">
    <property type="entry name" value="C2B_Copine"/>
</dbReference>
<dbReference type="InterPro" id="IPR045052">
    <property type="entry name" value="Copine"/>
</dbReference>
<dbReference type="InterPro" id="IPR010734">
    <property type="entry name" value="Copine_C"/>
</dbReference>
<dbReference type="InterPro" id="IPR002035">
    <property type="entry name" value="VWF_A"/>
</dbReference>
<dbReference type="InterPro" id="IPR036465">
    <property type="entry name" value="vWFA_dom_sf"/>
</dbReference>
<dbReference type="PANTHER" id="PTHR10857">
    <property type="entry name" value="COPINE"/>
    <property type="match status" value="1"/>
</dbReference>
<dbReference type="PANTHER" id="PTHR10857:SF30">
    <property type="entry name" value="COPINE-B-RELATED"/>
    <property type="match status" value="1"/>
</dbReference>
<dbReference type="Pfam" id="PF00168">
    <property type="entry name" value="C2"/>
    <property type="match status" value="2"/>
</dbReference>
<dbReference type="Pfam" id="PF07002">
    <property type="entry name" value="Copine"/>
    <property type="match status" value="1"/>
</dbReference>
<dbReference type="SMART" id="SM00239">
    <property type="entry name" value="C2"/>
    <property type="match status" value="2"/>
</dbReference>
<dbReference type="SMART" id="SM00327">
    <property type="entry name" value="VWA"/>
    <property type="match status" value="1"/>
</dbReference>
<dbReference type="SUPFAM" id="SSF49562">
    <property type="entry name" value="C2 domain (Calcium/lipid-binding domain, CaLB)"/>
    <property type="match status" value="2"/>
</dbReference>
<dbReference type="SUPFAM" id="SSF53300">
    <property type="entry name" value="vWA-like"/>
    <property type="match status" value="1"/>
</dbReference>
<dbReference type="PROSITE" id="PS50004">
    <property type="entry name" value="C2"/>
    <property type="match status" value="2"/>
</dbReference>
<dbReference type="PROSITE" id="PS50234">
    <property type="entry name" value="VWFA"/>
    <property type="match status" value="1"/>
</dbReference>
<comment type="cofactor">
    <cofactor evidence="1">
        <name>Ca(2+)</name>
        <dbReference type="ChEBI" id="CHEBI:29108"/>
    </cofactor>
</comment>
<comment type="developmental stage">
    <text evidence="3">Expressed at relatively high levels in vegetative cells. The expression goes down until the 8th hour of development and then goes up at 14 to 16 hours.</text>
</comment>
<comment type="similarity">
    <text evidence="4">Belongs to the copine family.</text>
</comment>
<keyword id="KW-0106">Calcium</keyword>
<keyword id="KW-0479">Metal-binding</keyword>
<keyword id="KW-1185">Reference proteome</keyword>
<keyword id="KW-0677">Repeat</keyword>
<name>CPND_DICDI</name>
<sequence length="530" mass="59429">MNPIQPIPKSKIEIRIKCKDLTSKDLLSQSDPQAIVYLKQQQRNDWIQQGKTEKLKNQKSPEFKQSITVDYHFEEVQLLKIVVIDIDKDIKLLKDFDDHDLIGEVNVSLGSILSSPGGRMKMSLTKNGILSGSITISTEEIRETGANIYFALEGNHLDKKDLLSSDPYFKIYKSGGTLVYQSDVIKNTLNPTFPPVYLKLEELNGGDMFRELTFEFMDWDKIGDHDLIGRFTTNTDTILRGGALEFEIINPKKVGKSGYKNSGIIKFYIARIQGDPTFLDYLHGGLEINLMVAIDCTASNMPPDVSTSLHYNTPTQPSQYASSIAAVGNVLAPYDYDQMIEVVGFGGLYNGHTSHCFPFNLTNGDDNKSEAHGLQEVLDIYYNNVLKIPFSYPTNFENVIHHAIKRASKSTQSNQKYTVLLIITDGDISDTQKTIDELVSASKSALSVVIIGVGNYHFEAMKILDGDEKGLVDSKGNPSKRDICQFVPFNDFKNYPEALAHETLKEIPSQVLSFMKLSKIHPNQPRQFNC</sequence>